<proteinExistence type="evidence at protein level"/>
<dbReference type="EC" id="1.5.1.8"/>
<dbReference type="EC" id="1.5.1.9"/>
<dbReference type="EMBL" id="U90522">
    <property type="protein sequence ID" value="AAB53975.1"/>
    <property type="molecule type" value="mRNA"/>
</dbReference>
<dbReference type="EMBL" id="U90523">
    <property type="protein sequence ID" value="AAD00700.1"/>
    <property type="molecule type" value="mRNA"/>
</dbReference>
<dbReference type="EMBL" id="U95758">
    <property type="protein sequence ID" value="AAB96825.1"/>
    <property type="molecule type" value="Genomic_DNA"/>
</dbReference>
<dbReference type="EMBL" id="U95759">
    <property type="protein sequence ID" value="AAB96826.1"/>
    <property type="molecule type" value="mRNA"/>
</dbReference>
<dbReference type="EMBL" id="AF295389">
    <property type="protein sequence ID" value="AAK97099.1"/>
    <property type="status" value="ALT_SEQ"/>
    <property type="molecule type" value="mRNA"/>
</dbReference>
<dbReference type="EMBL" id="AL035525">
    <property type="protein sequence ID" value="CAB36789.1"/>
    <property type="molecule type" value="Genomic_DNA"/>
</dbReference>
<dbReference type="EMBL" id="AL161583">
    <property type="protein sequence ID" value="CAB80032.1"/>
    <property type="molecule type" value="Genomic_DNA"/>
</dbReference>
<dbReference type="EMBL" id="CP002687">
    <property type="protein sequence ID" value="AEE86184.1"/>
    <property type="molecule type" value="Genomic_DNA"/>
</dbReference>
<dbReference type="EMBL" id="AY039906">
    <property type="protein sequence ID" value="AAK64010.1"/>
    <property type="status" value="ALT_INIT"/>
    <property type="molecule type" value="mRNA"/>
</dbReference>
<dbReference type="EMBL" id="AY094007">
    <property type="protein sequence ID" value="AAM16268.1"/>
    <property type="status" value="ALT_INIT"/>
    <property type="molecule type" value="mRNA"/>
</dbReference>
<dbReference type="PIR" id="T05195">
    <property type="entry name" value="T05195"/>
</dbReference>
<dbReference type="RefSeq" id="NP_001154283.1">
    <molecule id="Q9SMZ4-2"/>
    <property type="nucleotide sequence ID" value="NM_001160811.2"/>
</dbReference>
<dbReference type="SMR" id="Q9SMZ4"/>
<dbReference type="FunCoup" id="Q9SMZ4">
    <property type="interactions" value="441"/>
</dbReference>
<dbReference type="STRING" id="3702.Q9SMZ4"/>
<dbReference type="iPTMnet" id="Q9SMZ4"/>
<dbReference type="PaxDb" id="3702-AT4G33150.2"/>
<dbReference type="EnsemblPlants" id="AT4G33150.3">
    <molecule id="Q9SMZ4-2"/>
    <property type="protein sequence ID" value="AT4G33150.3"/>
    <property type="gene ID" value="AT4G33150"/>
</dbReference>
<dbReference type="GeneID" id="829452"/>
<dbReference type="Gramene" id="AT4G33150.3">
    <molecule id="Q9SMZ4-2"/>
    <property type="protein sequence ID" value="AT4G33150.3"/>
    <property type="gene ID" value="AT4G33150"/>
</dbReference>
<dbReference type="KEGG" id="ath:AT4G33150"/>
<dbReference type="Araport" id="AT4G33150"/>
<dbReference type="TAIR" id="AT4G33150">
    <property type="gene designation" value="LKR"/>
</dbReference>
<dbReference type="eggNOG" id="KOG0172">
    <property type="taxonomic scope" value="Eukaryota"/>
</dbReference>
<dbReference type="InParanoid" id="Q9SMZ4"/>
<dbReference type="OMA" id="TPHVHDI"/>
<dbReference type="PhylomeDB" id="Q9SMZ4"/>
<dbReference type="BioCyc" id="ARA:AT4G33150-MONOMER"/>
<dbReference type="SABIO-RK" id="Q9SMZ4"/>
<dbReference type="UniPathway" id="UPA00868">
    <property type="reaction ID" value="UER00835"/>
</dbReference>
<dbReference type="UniPathway" id="UPA00868">
    <property type="reaction ID" value="UER00836"/>
</dbReference>
<dbReference type="PRO" id="PR:Q9SMZ4"/>
<dbReference type="Proteomes" id="UP000006548">
    <property type="component" value="Chromosome 4"/>
</dbReference>
<dbReference type="ExpressionAtlas" id="Q9SMZ4">
    <property type="expression patterns" value="baseline and differential"/>
</dbReference>
<dbReference type="GO" id="GO:0005737">
    <property type="term" value="C:cytoplasm"/>
    <property type="evidence" value="ECO:0007669"/>
    <property type="project" value="UniProtKB-SubCell"/>
</dbReference>
<dbReference type="GO" id="GO:0047131">
    <property type="term" value="F:saccharopine dehydrogenase (NAD+, L-glutamate-forming) activity"/>
    <property type="evidence" value="ECO:0007669"/>
    <property type="project" value="UniProtKB-EC"/>
</dbReference>
<dbReference type="GO" id="GO:0047130">
    <property type="term" value="F:saccharopine dehydrogenase (NADP+, L-lysine-forming) activity"/>
    <property type="evidence" value="ECO:0007669"/>
    <property type="project" value="UniProtKB-EC"/>
</dbReference>
<dbReference type="GO" id="GO:0033512">
    <property type="term" value="P:L-lysine catabolic process to acetyl-CoA via saccharopine"/>
    <property type="evidence" value="ECO:0007669"/>
    <property type="project" value="UniProtKB-UniPathway"/>
</dbReference>
<dbReference type="CDD" id="cd12189">
    <property type="entry name" value="LKR_SDH_like"/>
    <property type="match status" value="1"/>
</dbReference>
<dbReference type="CDD" id="cd12144">
    <property type="entry name" value="SDH_N_domain"/>
    <property type="match status" value="1"/>
</dbReference>
<dbReference type="FunFam" id="3.30.360.10:FF:000008">
    <property type="entry name" value="Alpha-aminoadipic semialdehyde synthase, mitochondrial"/>
    <property type="match status" value="1"/>
</dbReference>
<dbReference type="FunFam" id="1.10.1870.10:FF:000003">
    <property type="entry name" value="Lysine-ketoglutarate reductase/saccharopine dehydrogenase1"/>
    <property type="match status" value="1"/>
</dbReference>
<dbReference type="FunFam" id="3.30.70.2690:FF:000001">
    <property type="entry name" value="Lysine-ketoglutarate reductase/saccharopine dehydrogenase1"/>
    <property type="match status" value="1"/>
</dbReference>
<dbReference type="FunFam" id="3.40.50.720:FF:000284">
    <property type="entry name" value="Lysine-ketoglutarate reductase/saccharopine dehydrogenase1"/>
    <property type="match status" value="1"/>
</dbReference>
<dbReference type="Gene3D" id="3.30.360.10">
    <property type="entry name" value="Dihydrodipicolinate Reductase, domain 2"/>
    <property type="match status" value="1"/>
</dbReference>
<dbReference type="Gene3D" id="1.10.1870.10">
    <property type="entry name" value="Domain 3, Saccharopine reductase"/>
    <property type="match status" value="1"/>
</dbReference>
<dbReference type="Gene3D" id="3.30.70.2690">
    <property type="entry name" value="LOR/SDH bifunctional enzyme, conserved domain"/>
    <property type="match status" value="1"/>
</dbReference>
<dbReference type="Gene3D" id="3.40.50.720">
    <property type="entry name" value="NAD(P)-binding Rossmann-like Domain"/>
    <property type="match status" value="2"/>
</dbReference>
<dbReference type="InterPro" id="IPR051168">
    <property type="entry name" value="AASS"/>
</dbReference>
<dbReference type="InterPro" id="IPR007886">
    <property type="entry name" value="AlaDH/PNT_N"/>
</dbReference>
<dbReference type="InterPro" id="IPR007698">
    <property type="entry name" value="AlaDH/PNT_NAD(H)-bd"/>
</dbReference>
<dbReference type="InterPro" id="IPR007545">
    <property type="entry name" value="LOR/SDH_bifunc_enz_cons_dom"/>
</dbReference>
<dbReference type="InterPro" id="IPR043009">
    <property type="entry name" value="LOR/SDH_bifunc_enz_cons_dom_sf"/>
</dbReference>
<dbReference type="InterPro" id="IPR036291">
    <property type="entry name" value="NAD(P)-bd_dom_sf"/>
</dbReference>
<dbReference type="InterPro" id="IPR032095">
    <property type="entry name" value="Sacchrp_dh-like_C"/>
</dbReference>
<dbReference type="InterPro" id="IPR005097">
    <property type="entry name" value="Sacchrp_dh_NADP-bd"/>
</dbReference>
<dbReference type="PANTHER" id="PTHR11133:SF22">
    <property type="entry name" value="ALPHA-AMINOADIPIC SEMIALDEHYDE SYNTHASE, MITOCHONDRIAL"/>
    <property type="match status" value="1"/>
</dbReference>
<dbReference type="PANTHER" id="PTHR11133">
    <property type="entry name" value="SACCHAROPINE DEHYDROGENASE"/>
    <property type="match status" value="1"/>
</dbReference>
<dbReference type="Pfam" id="PF05222">
    <property type="entry name" value="AlaDh_PNT_N"/>
    <property type="match status" value="1"/>
</dbReference>
<dbReference type="Pfam" id="PF04455">
    <property type="entry name" value="Saccharop_dh_N"/>
    <property type="match status" value="1"/>
</dbReference>
<dbReference type="Pfam" id="PF16653">
    <property type="entry name" value="Sacchrp_dh_C"/>
    <property type="match status" value="1"/>
</dbReference>
<dbReference type="Pfam" id="PF03435">
    <property type="entry name" value="Sacchrp_dh_NADP"/>
    <property type="match status" value="1"/>
</dbReference>
<dbReference type="SMART" id="SM01002">
    <property type="entry name" value="AlaDh_PNT_C"/>
    <property type="match status" value="1"/>
</dbReference>
<dbReference type="SMART" id="SM01003">
    <property type="entry name" value="AlaDh_PNT_N"/>
    <property type="match status" value="1"/>
</dbReference>
<dbReference type="SUPFAM" id="SSF52283">
    <property type="entry name" value="Formate/glycerate dehydrogenase catalytic domain-like"/>
    <property type="match status" value="1"/>
</dbReference>
<dbReference type="SUPFAM" id="SSF55347">
    <property type="entry name" value="Glyceraldehyde-3-phosphate dehydrogenase-like, C-terminal domain"/>
    <property type="match status" value="1"/>
</dbReference>
<dbReference type="SUPFAM" id="SSF51735">
    <property type="entry name" value="NAD(P)-binding Rossmann-fold domains"/>
    <property type="match status" value="1"/>
</dbReference>
<sequence length="1064" mass="117149">MNSNGHEEEKKLGNGVVGILAETVNKWERRTPLTPSHCARLLHGGKDRTGISRIVVQPSAKRIHHDALYEDVGCEISDDLSDCGLILGIKQPELEMILPERAYAFFSHTHKAQKENMPLLDKILSERVTLCDYELIVGDHGKRLLAFGKYAGRAGLVDFLHGLGQRKLILGYSTPFLSLGASYMYSSLAAAKAAVISVGEEIASQGLPLGICPLVFVFTGTGNVSLGAQEIFKLLPHTFVEPSKLPELFVKDKGISQNGISTKRVYQVYGCIITSQDMVEHKDPSKSFDKADYYAHPEHYNPVFHEKISPYTSVLVNCMYWEKRFPCLLSTKQLQDLTKKGLPLVGICDITCDIGGSIEFVNRATLIDSPFFRFNPSNNSYYDDMDGDGVLCMAVDILPTEFAKEASQHFGDILSGFVGSLASMTEISDLPAHLKRACISYRGELTSLYEYIPRMRKSNPEEAQDNIIANGVSSQRTFNILVSLSGHLFDKFLINEALDMIEAAGGSFHLAKCELGQSADAESYSELEVGADDKRVLDQIIDSLTRLANPNEDYISPHREANKISLKIGKVQQENEIKEKPEMTKKSGVLILGAGRVCRPAADFLASVRTISSQQWYKTYFGADSEEKTDVHVIVASLYLKDAKETVEGISDVEAVRLDVSDSESLLKYVSQVDVVLSLLPASCHAVVAKTCIELKKHLVTASYVDDETSMLHEKAKSAGITILGEMGLDPGIDHMMAMKMINDAHIKKGKVKSFTSYCGGLPSPAAANNPLAYKFSWNPAGAIRAGQNPAKYKSNGDIIHVDGKNLYDSAARFRVPNLPAFALECFPNRDSLVYGEHYGIESEATTIFRGTLRYEGFSMIMATLSKLGFFDSEANQVLSTGKRITFGALLSNILNKDADNESEPLAGEEEISKRIIKLGHSKETAAKAAKTIVFLGFNEEREVPSLCKSVFDATCYLMEEKLAYSGNEQDMVLLHHEVEVEFLESKRIEKHTATLLEFGDIKNGQTTTAMAKTVGIPAAIGALLLIEDKIKTRGVLRPLEAEVYLPALDILQAYGIKLMEKAE</sequence>
<organism>
    <name type="scientific">Arabidopsis thaliana</name>
    <name type="common">Mouse-ear cress</name>
    <dbReference type="NCBI Taxonomy" id="3702"/>
    <lineage>
        <taxon>Eukaryota</taxon>
        <taxon>Viridiplantae</taxon>
        <taxon>Streptophyta</taxon>
        <taxon>Embryophyta</taxon>
        <taxon>Tracheophyta</taxon>
        <taxon>Spermatophyta</taxon>
        <taxon>Magnoliopsida</taxon>
        <taxon>eudicotyledons</taxon>
        <taxon>Gunneridae</taxon>
        <taxon>Pentapetalae</taxon>
        <taxon>rosids</taxon>
        <taxon>malvids</taxon>
        <taxon>Brassicales</taxon>
        <taxon>Brassicaceae</taxon>
        <taxon>Camelineae</taxon>
        <taxon>Arabidopsis</taxon>
    </lineage>
</organism>
<reference key="1">
    <citation type="journal article" date="1997" name="Plant Cell">
        <title>Regulation of lysine catabolism through lysine-ketoglutarate reductase and saccharopine dehydrogenase in Arabidopsis.</title>
        <authorList>
            <person name="Tang G."/>
            <person name="Miron D."/>
            <person name="Zhu-Shimoni J.X."/>
            <person name="Galili G."/>
        </authorList>
    </citation>
    <scope>NUCLEOTIDE SEQUENCE [MRNA] (ISOFORMS LONG AND SHORT)</scope>
    <scope>FUNCTION</scope>
    <scope>TISSUE SPECIFICITY</scope>
    <scope>DEVELOPMENTAL STAGE</scope>
    <source>
        <strain>cv. Columbia</strain>
        <tissue>Seedling hypocotyl</tissue>
    </source>
</reference>
<reference key="2">
    <citation type="journal article" date="1997" name="Plant Mol. Biol.">
        <title>Lysine-ketoglutarate reductase and saccharopine dehydrogenase from Arabidopsis thaliana: nucleotide sequence and characterization.</title>
        <authorList>
            <person name="Epelbaum S."/>
            <person name="McDevitt R."/>
            <person name="Falco S.C."/>
        </authorList>
    </citation>
    <scope>NUCLEOTIDE SEQUENCE [GENOMIC DNA / MRNA] (ISOFORM LONG)</scope>
    <scope>FUNCTION</scope>
    <source>
        <strain>cv. Columbia</strain>
        <strain>cv. Landsberg erecta</strain>
    </source>
</reference>
<reference key="3">
    <citation type="journal article" date="2002" name="Plant Physiol.">
        <title>The bifunctional LKR/SDH locus of plants also encodes a highly active monofunctional lysine-ketoglutarate reductase using a polyadenylation signal located within an intron.</title>
        <authorList>
            <person name="Tang G."/>
            <person name="Zhu X."/>
            <person name="Gakiere B."/>
            <person name="Levanony H."/>
            <person name="Kahana A."/>
            <person name="Galili G."/>
        </authorList>
    </citation>
    <scope>NUCLEOTIDE SEQUENCE [MRNA]</scope>
</reference>
<reference key="4">
    <citation type="journal article" date="1999" name="Nature">
        <title>Sequence and analysis of chromosome 4 of the plant Arabidopsis thaliana.</title>
        <authorList>
            <person name="Mayer K.F.X."/>
            <person name="Schueller C."/>
            <person name="Wambutt R."/>
            <person name="Murphy G."/>
            <person name="Volckaert G."/>
            <person name="Pohl T."/>
            <person name="Duesterhoeft A."/>
            <person name="Stiekema W."/>
            <person name="Entian K.-D."/>
            <person name="Terryn N."/>
            <person name="Harris B."/>
            <person name="Ansorge W."/>
            <person name="Brandt P."/>
            <person name="Grivell L.A."/>
            <person name="Rieger M."/>
            <person name="Weichselgartner M."/>
            <person name="de Simone V."/>
            <person name="Obermaier B."/>
            <person name="Mache R."/>
            <person name="Mueller M."/>
            <person name="Kreis M."/>
            <person name="Delseny M."/>
            <person name="Puigdomenech P."/>
            <person name="Watson M."/>
            <person name="Schmidtheini T."/>
            <person name="Reichert B."/>
            <person name="Portetelle D."/>
            <person name="Perez-Alonso M."/>
            <person name="Boutry M."/>
            <person name="Bancroft I."/>
            <person name="Vos P."/>
            <person name="Hoheisel J."/>
            <person name="Zimmermann W."/>
            <person name="Wedler H."/>
            <person name="Ridley P."/>
            <person name="Langham S.-A."/>
            <person name="McCullagh B."/>
            <person name="Bilham L."/>
            <person name="Robben J."/>
            <person name="van der Schueren J."/>
            <person name="Grymonprez B."/>
            <person name="Chuang Y.-J."/>
            <person name="Vandenbussche F."/>
            <person name="Braeken M."/>
            <person name="Weltjens I."/>
            <person name="Voet M."/>
            <person name="Bastiaens I."/>
            <person name="Aert R."/>
            <person name="Defoor E."/>
            <person name="Weitzenegger T."/>
            <person name="Bothe G."/>
            <person name="Ramsperger U."/>
            <person name="Hilbert H."/>
            <person name="Braun M."/>
            <person name="Holzer E."/>
            <person name="Brandt A."/>
            <person name="Peters S."/>
            <person name="van Staveren M."/>
            <person name="Dirkse W."/>
            <person name="Mooijman P."/>
            <person name="Klein Lankhorst R."/>
            <person name="Rose M."/>
            <person name="Hauf J."/>
            <person name="Koetter P."/>
            <person name="Berneiser S."/>
            <person name="Hempel S."/>
            <person name="Feldpausch M."/>
            <person name="Lamberth S."/>
            <person name="Van den Daele H."/>
            <person name="De Keyser A."/>
            <person name="Buysshaert C."/>
            <person name="Gielen J."/>
            <person name="Villarroel R."/>
            <person name="De Clercq R."/>
            <person name="van Montagu M."/>
            <person name="Rogers J."/>
            <person name="Cronin A."/>
            <person name="Quail M.A."/>
            <person name="Bray-Allen S."/>
            <person name="Clark L."/>
            <person name="Doggett J."/>
            <person name="Hall S."/>
            <person name="Kay M."/>
            <person name="Lennard N."/>
            <person name="McLay K."/>
            <person name="Mayes R."/>
            <person name="Pettett A."/>
            <person name="Rajandream M.A."/>
            <person name="Lyne M."/>
            <person name="Benes V."/>
            <person name="Rechmann S."/>
            <person name="Borkova D."/>
            <person name="Bloecker H."/>
            <person name="Scharfe M."/>
            <person name="Grimm M."/>
            <person name="Loehnert T.-H."/>
            <person name="Dose S."/>
            <person name="de Haan M."/>
            <person name="Maarse A.C."/>
            <person name="Schaefer M."/>
            <person name="Mueller-Auer S."/>
            <person name="Gabel C."/>
            <person name="Fuchs M."/>
            <person name="Fartmann B."/>
            <person name="Granderath K."/>
            <person name="Dauner D."/>
            <person name="Herzl A."/>
            <person name="Neumann S."/>
            <person name="Argiriou A."/>
            <person name="Vitale D."/>
            <person name="Liguori R."/>
            <person name="Piravandi E."/>
            <person name="Massenet O."/>
            <person name="Quigley F."/>
            <person name="Clabauld G."/>
            <person name="Muendlein A."/>
            <person name="Felber R."/>
            <person name="Schnabl S."/>
            <person name="Hiller R."/>
            <person name="Schmidt W."/>
            <person name="Lecharny A."/>
            <person name="Aubourg S."/>
            <person name="Chefdor F."/>
            <person name="Cooke R."/>
            <person name="Berger C."/>
            <person name="Monfort A."/>
            <person name="Casacuberta E."/>
            <person name="Gibbons T."/>
            <person name="Weber N."/>
            <person name="Vandenbol M."/>
            <person name="Bargues M."/>
            <person name="Terol J."/>
            <person name="Torres A."/>
            <person name="Perez-Perez A."/>
            <person name="Purnelle B."/>
            <person name="Bent E."/>
            <person name="Johnson S."/>
            <person name="Tacon D."/>
            <person name="Jesse T."/>
            <person name="Heijnen L."/>
            <person name="Schwarz S."/>
            <person name="Scholler P."/>
            <person name="Heber S."/>
            <person name="Francs P."/>
            <person name="Bielke C."/>
            <person name="Frishman D."/>
            <person name="Haase D."/>
            <person name="Lemcke K."/>
            <person name="Mewes H.-W."/>
            <person name="Stocker S."/>
            <person name="Zaccaria P."/>
            <person name="Bevan M."/>
            <person name="Wilson R.K."/>
            <person name="de la Bastide M."/>
            <person name="Habermann K."/>
            <person name="Parnell L."/>
            <person name="Dedhia N."/>
            <person name="Gnoj L."/>
            <person name="Schutz K."/>
            <person name="Huang E."/>
            <person name="Spiegel L."/>
            <person name="Sekhon M."/>
            <person name="Murray J."/>
            <person name="Sheet P."/>
            <person name="Cordes M."/>
            <person name="Abu-Threideh J."/>
            <person name="Stoneking T."/>
            <person name="Kalicki J."/>
            <person name="Graves T."/>
            <person name="Harmon G."/>
            <person name="Edwards J."/>
            <person name="Latreille P."/>
            <person name="Courtney L."/>
            <person name="Cloud J."/>
            <person name="Abbott A."/>
            <person name="Scott K."/>
            <person name="Johnson D."/>
            <person name="Minx P."/>
            <person name="Bentley D."/>
            <person name="Fulton B."/>
            <person name="Miller N."/>
            <person name="Greco T."/>
            <person name="Kemp K."/>
            <person name="Kramer J."/>
            <person name="Fulton L."/>
            <person name="Mardis E."/>
            <person name="Dante M."/>
            <person name="Pepin K."/>
            <person name="Hillier L.W."/>
            <person name="Nelson J."/>
            <person name="Spieth J."/>
            <person name="Ryan E."/>
            <person name="Andrews S."/>
            <person name="Geisel C."/>
            <person name="Layman D."/>
            <person name="Du H."/>
            <person name="Ali J."/>
            <person name="Berghoff A."/>
            <person name="Jones K."/>
            <person name="Drone K."/>
            <person name="Cotton M."/>
            <person name="Joshu C."/>
            <person name="Antonoiu B."/>
            <person name="Zidanic M."/>
            <person name="Strong C."/>
            <person name="Sun H."/>
            <person name="Lamar B."/>
            <person name="Yordan C."/>
            <person name="Ma P."/>
            <person name="Zhong J."/>
            <person name="Preston R."/>
            <person name="Vil D."/>
            <person name="Shekher M."/>
            <person name="Matero A."/>
            <person name="Shah R."/>
            <person name="Swaby I.K."/>
            <person name="O'Shaughnessy A."/>
            <person name="Rodriguez M."/>
            <person name="Hoffman J."/>
            <person name="Till S."/>
            <person name="Granat S."/>
            <person name="Shohdy N."/>
            <person name="Hasegawa A."/>
            <person name="Hameed A."/>
            <person name="Lodhi M."/>
            <person name="Johnson A."/>
            <person name="Chen E."/>
            <person name="Marra M.A."/>
            <person name="Martienssen R."/>
            <person name="McCombie W.R."/>
        </authorList>
    </citation>
    <scope>NUCLEOTIDE SEQUENCE [LARGE SCALE GENOMIC DNA]</scope>
    <source>
        <strain>cv. Columbia</strain>
    </source>
</reference>
<reference key="5">
    <citation type="journal article" date="2017" name="Plant J.">
        <title>Araport11: a complete reannotation of the Arabidopsis thaliana reference genome.</title>
        <authorList>
            <person name="Cheng C.Y."/>
            <person name="Krishnakumar V."/>
            <person name="Chan A.P."/>
            <person name="Thibaud-Nissen F."/>
            <person name="Schobel S."/>
            <person name="Town C.D."/>
        </authorList>
    </citation>
    <scope>GENOME REANNOTATION</scope>
    <source>
        <strain>cv. Columbia</strain>
    </source>
</reference>
<reference key="6">
    <citation type="journal article" date="2003" name="Science">
        <title>Empirical analysis of transcriptional activity in the Arabidopsis genome.</title>
        <authorList>
            <person name="Yamada K."/>
            <person name="Lim J."/>
            <person name="Dale J.M."/>
            <person name="Chen H."/>
            <person name="Shinn P."/>
            <person name="Palm C.J."/>
            <person name="Southwick A.M."/>
            <person name="Wu H.C."/>
            <person name="Kim C.J."/>
            <person name="Nguyen M."/>
            <person name="Pham P.K."/>
            <person name="Cheuk R.F."/>
            <person name="Karlin-Newmann G."/>
            <person name="Liu S.X."/>
            <person name="Lam B."/>
            <person name="Sakano H."/>
            <person name="Wu T."/>
            <person name="Yu G."/>
            <person name="Miranda M."/>
            <person name="Quach H.L."/>
            <person name="Tripp M."/>
            <person name="Chang C.H."/>
            <person name="Lee J.M."/>
            <person name="Toriumi M.J."/>
            <person name="Chan M.M."/>
            <person name="Tang C.C."/>
            <person name="Onodera C.S."/>
            <person name="Deng J.M."/>
            <person name="Akiyama K."/>
            <person name="Ansari Y."/>
            <person name="Arakawa T."/>
            <person name="Banh J."/>
            <person name="Banno F."/>
            <person name="Bowser L."/>
            <person name="Brooks S.Y."/>
            <person name="Carninci P."/>
            <person name="Chao Q."/>
            <person name="Choy N."/>
            <person name="Enju A."/>
            <person name="Goldsmith A.D."/>
            <person name="Gurjal M."/>
            <person name="Hansen N.F."/>
            <person name="Hayashizaki Y."/>
            <person name="Johnson-Hopson C."/>
            <person name="Hsuan V.W."/>
            <person name="Iida K."/>
            <person name="Karnes M."/>
            <person name="Khan S."/>
            <person name="Koesema E."/>
            <person name="Ishida J."/>
            <person name="Jiang P.X."/>
            <person name="Jones T."/>
            <person name="Kawai J."/>
            <person name="Kamiya A."/>
            <person name="Meyers C."/>
            <person name="Nakajima M."/>
            <person name="Narusaka M."/>
            <person name="Seki M."/>
            <person name="Sakurai T."/>
            <person name="Satou M."/>
            <person name="Tamse R."/>
            <person name="Vaysberg M."/>
            <person name="Wallender E.K."/>
            <person name="Wong C."/>
            <person name="Yamamura Y."/>
            <person name="Yuan S."/>
            <person name="Shinozaki K."/>
            <person name="Davis R.W."/>
            <person name="Theologis A."/>
            <person name="Ecker J.R."/>
        </authorList>
    </citation>
    <scope>NUCLEOTIDE SEQUENCE [LARGE SCALE MRNA] OF 529-1064 (ISOFORM LONG)</scope>
    <source>
        <strain>cv. Columbia</strain>
    </source>
</reference>
<reference key="7">
    <citation type="journal article" date="2000" name="Plant J.">
        <title>A novel composite locus of Arabidopsis encoding two polypeptides with metabolically related but distinct functions in lysine catabolism.</title>
        <authorList>
            <person name="Tang G."/>
            <person name="Zhu X."/>
            <person name="Tang X."/>
            <person name="Galili G."/>
        </authorList>
    </citation>
    <scope>ALTERNATIVE INITIATION</scope>
</reference>
<reference key="8">
    <citation type="journal article" date="2000" name="Plant Physiol.">
        <title>Characterization of the two saccharopine dehydrogenase isozymes of lysine catabolism encoded by the single composite AtLKR/SDH locus of Arabidopsis.</title>
        <authorList>
            <person name="Zhu X."/>
            <person name="Tang G."/>
            <person name="Galili G."/>
        </authorList>
    </citation>
    <scope>SUBCELLULAR LOCATION</scope>
    <scope>BIOPHYSICOCHEMICAL PROPERTIES</scope>
</reference>
<reference key="9">
    <citation type="journal article" date="2001" name="Plant Physiol.">
        <title>A T-DNA insertion knockout of the bifunctional lysine-ketoglutarate reductase/saccharopine dehydrogenase gene elevates lysine levels in Arabidopsis seeds.</title>
        <authorList>
            <person name="Zhu X."/>
            <person name="Tang G."/>
            <person name="Granier F."/>
            <person name="Bouchez D."/>
            <person name="Galili G."/>
        </authorList>
    </citation>
    <scope>FUNCTION</scope>
</reference>
<reference key="10">
    <citation type="journal article" date="2002" name="J. Biol. Chem.">
        <title>The activity of the Arabidopsis bifunctional lysine-ketoglutarate reductase/saccharopine dehydrogenase enzyme of lysine catabolism is regulated by functional interaction between its two enzyme domains.</title>
        <authorList>
            <person name="Zhu X."/>
            <person name="Tang G."/>
            <person name="Galili G."/>
        </authorList>
    </citation>
    <scope>ACTIVITY REGULATION</scope>
    <scope>SUBUNIT</scope>
    <scope>PHOSPHORYLATION AT THR-238 AND SER-458</scope>
    <scope>MUTAGENESIS OF THR-238; SER-407; SER-458 AND 551-ASN--ARG-554</scope>
</reference>
<reference key="11">
    <citation type="journal article" date="2003" name="Plant Physiol.">
        <title>Synthesis of the Arabidopsis bifunctional lysine-ketoglutarate reductase/saccharopine dehydrogenase enzyme of lysine catabolism is concertedly regulated by metabolic and stress-associated signals.</title>
        <authorList>
            <person name="Stepansky A."/>
            <person name="Galili G."/>
        </authorList>
    </citation>
    <scope>INDUCTION</scope>
</reference>
<reference key="12">
    <citation type="journal article" date="2005" name="J. Exp. Bot.">
        <title>Regulation of lysine catabolism in Arabidopsis through concertedly regulated synthesis of the two distinct gene products of the composite AtLKR/SDH locus.</title>
        <authorList>
            <person name="Stepansky A."/>
            <person name="Yao Y."/>
            <person name="Tang G."/>
            <person name="Galili G."/>
        </authorList>
    </citation>
    <scope>TISSUE SPECIFICITY</scope>
    <scope>INDUCTION</scope>
</reference>
<keyword id="KW-0024">Alternative initiation</keyword>
<keyword id="KW-0963">Cytoplasm</keyword>
<keyword id="KW-0511">Multifunctional enzyme</keyword>
<keyword id="KW-0520">NAD</keyword>
<keyword id="KW-0521">NADP</keyword>
<keyword id="KW-0560">Oxidoreductase</keyword>
<keyword id="KW-0597">Phosphoprotein</keyword>
<keyword id="KW-1185">Reference proteome</keyword>
<feature type="chain" id="PRO_0000226070" description="Alpha-aminoadipic semialdehyde synthase">
    <location>
        <begin position="1"/>
        <end position="1064"/>
    </location>
</feature>
<feature type="region of interest" description="Lysine-ketoglutarate reductase">
    <location>
        <begin position="24"/>
        <end position="445"/>
    </location>
</feature>
<feature type="region of interest" description="Saccharopine dehydrogenase">
    <location>
        <begin position="583"/>
        <end position="1064"/>
    </location>
</feature>
<feature type="binding site" evidence="1">
    <location>
        <begin position="703"/>
        <end position="704"/>
    </location>
    <ligand>
        <name>L-saccharopine</name>
        <dbReference type="ChEBI" id="CHEBI:57951"/>
    </ligand>
</feature>
<feature type="binding site" evidence="1">
    <location>
        <begin position="729"/>
        <end position="731"/>
    </location>
    <ligand>
        <name>NADP(+)</name>
        <dbReference type="ChEBI" id="CHEBI:58349"/>
    </ligand>
</feature>
<feature type="binding site" evidence="1">
    <location>
        <position position="730"/>
    </location>
    <ligand>
        <name>L-saccharopine</name>
        <dbReference type="ChEBI" id="CHEBI:57951"/>
    </ligand>
</feature>
<feature type="binding site" evidence="1">
    <location>
        <position position="830"/>
    </location>
    <ligand>
        <name>L-saccharopine</name>
        <dbReference type="ChEBI" id="CHEBI:57951"/>
    </ligand>
</feature>
<feature type="binding site" evidence="1">
    <location>
        <begin position="852"/>
        <end position="854"/>
    </location>
    <ligand>
        <name>L-saccharopine</name>
        <dbReference type="ChEBI" id="CHEBI:57951"/>
    </ligand>
</feature>
<feature type="modified residue" description="Phosphothreonine" evidence="4">
    <location>
        <position position="238"/>
    </location>
</feature>
<feature type="modified residue" description="Phosphoserine" evidence="4">
    <location>
        <position position="458"/>
    </location>
</feature>
<feature type="splice variant" id="VSP_018641" description="In isoform Short." evidence="9">
    <location>
        <begin position="1"/>
        <end position="582"/>
    </location>
</feature>
<feature type="mutagenesis site" description="No effect on LKR and SDH activity." evidence="4">
    <original>T</original>
    <variation>A</variation>
    <variation>D</variation>
    <location>
        <position position="238"/>
    </location>
</feature>
<feature type="mutagenesis site" description="No effect on LKR and SDH activity." evidence="4">
    <original>S</original>
    <variation>A</variation>
    <location>
        <position position="407"/>
    </location>
</feature>
<feature type="mutagenesis site" description="No LKR activity, but no effect on SDH activity." evidence="4">
    <original>S</original>
    <variation>D</variation>
    <location>
        <position position="407"/>
    </location>
</feature>
<feature type="mutagenesis site" description="Reduced LKR activity, but no effect on SDH activity." evidence="4">
    <original>S</original>
    <variation>A</variation>
    <location>
        <position position="458"/>
    </location>
</feature>
<feature type="mutagenesis site" description="No effect on LKR and SDH activity." evidence="4">
    <original>S</original>
    <variation>D</variation>
    <location>
        <position position="458"/>
    </location>
</feature>
<feature type="mutagenesis site" description="Loss of LKR activity stimulation by NaCl." evidence="4">
    <original>NEDY</original>
    <variation>IEGR</variation>
    <location>
        <begin position="551"/>
        <end position="554"/>
    </location>
</feature>
<feature type="sequence conflict" description="In Ref. 1; AAB53975, 2; AAB96825/AAB96826 and 3; AAK97099." evidence="10" ref="1 2 3">
    <original>KLI</original>
    <variation>YLS</variation>
    <location>
        <begin position="167"/>
        <end position="169"/>
    </location>
</feature>
<feature type="sequence conflict" description="In Ref. 1; AAB53975 and 3; AAK97099." evidence="10" ref="1 3">
    <original>R</original>
    <variation>S</variation>
    <location>
        <position position="324"/>
    </location>
</feature>
<feature type="sequence conflict" description="In Ref. 6; AAK64010/AAM16268." evidence="10" ref="6">
    <original>F</original>
    <variation>V</variation>
    <location>
        <position position="621"/>
    </location>
</feature>
<feature type="sequence conflict" description="In Ref. 1; AAB53975/AAD00700." evidence="10" ref="1">
    <original>K</original>
    <variation>N</variation>
    <location>
        <position position="715"/>
    </location>
</feature>
<feature type="sequence conflict" description="In Ref. 1; AAB53975/AAD00700." evidence="10" ref="1">
    <original>H</original>
    <variation>P</variation>
    <location>
        <position position="735"/>
    </location>
</feature>
<feature type="sequence conflict" description="In Ref. 1; AAB53975/AAD00700." evidence="10" ref="1">
    <original>M</original>
    <variation>K</variation>
    <location>
        <position position="739"/>
    </location>
</feature>
<feature type="sequence conflict" description="In Ref. 1; AAB53975/AAD00700." evidence="10" ref="1">
    <original>HIK</original>
    <variation>PIT</variation>
    <location>
        <begin position="746"/>
        <end position="748"/>
    </location>
</feature>
<feature type="sequence conflict" description="In Ref. 1; AAB53975/AAD00700." evidence="10" ref="1">
    <original>P</original>
    <variation>R</variation>
    <location>
        <position position="765"/>
    </location>
</feature>
<feature type="sequence conflict" description="In Ref. 2; AAB96825/AAB96826." evidence="10" ref="2">
    <original>F</original>
    <variation>L</variation>
    <location>
        <position position="827"/>
    </location>
</feature>
<feature type="sequence conflict" description="In Ref. 2; AAB96825." evidence="10" ref="2">
    <original>L</original>
    <variation>F</variation>
    <location>
        <position position="1040"/>
    </location>
</feature>
<name>AASS_ARATH</name>
<evidence type="ECO:0000250" key="1">
    <source>
        <dbReference type="UniProtKB" id="Q9P4R4"/>
    </source>
</evidence>
<evidence type="ECO:0000269" key="2">
    <source>
    </source>
</evidence>
<evidence type="ECO:0000269" key="3">
    <source>
    </source>
</evidence>
<evidence type="ECO:0000269" key="4">
    <source>
    </source>
</evidence>
<evidence type="ECO:0000269" key="5">
    <source>
    </source>
</evidence>
<evidence type="ECO:0000269" key="6">
    <source>
    </source>
</evidence>
<evidence type="ECO:0000269" key="7">
    <source>
    </source>
</evidence>
<evidence type="ECO:0000269" key="8">
    <source>
    </source>
</evidence>
<evidence type="ECO:0000303" key="9">
    <source>
    </source>
</evidence>
<evidence type="ECO:0000305" key="10"/>
<accession>Q9SMZ4</accession>
<accession>O04155</accession>
<accession>O04156</accession>
<accession>O04884</accession>
<accession>Q7DM71</accession>
<accession>Q947M5</accession>
<accession>Q94BT4</accession>
<gene>
    <name type="primary">LKR/SDH</name>
    <name type="synonym">LKR</name>
    <name type="synonym">SDH</name>
    <name type="ordered locus">At4g33150</name>
    <name type="ORF">F4I10.80</name>
</gene>
<comment type="function">
    <text evidence="3 7 8">Bifunctional enzyme that catalyzes the first two steps in lysine degradation. The N-terminal and the C-terminal contain lysine-oxoglutarate reductase and saccharopine dehydrogenase activity, respectively. Negatively regulates free Lys accumulation in seeds.</text>
</comment>
<comment type="catalytic activity">
    <reaction>
        <text>L-saccharopine + NADP(+) + H2O = L-lysine + 2-oxoglutarate + NADPH + H(+)</text>
        <dbReference type="Rhea" id="RHEA:19373"/>
        <dbReference type="ChEBI" id="CHEBI:15377"/>
        <dbReference type="ChEBI" id="CHEBI:15378"/>
        <dbReference type="ChEBI" id="CHEBI:16810"/>
        <dbReference type="ChEBI" id="CHEBI:32551"/>
        <dbReference type="ChEBI" id="CHEBI:57783"/>
        <dbReference type="ChEBI" id="CHEBI:57951"/>
        <dbReference type="ChEBI" id="CHEBI:58349"/>
        <dbReference type="EC" id="1.5.1.8"/>
    </reaction>
</comment>
<comment type="catalytic activity">
    <reaction>
        <text>L-saccharopine + NAD(+) + H2O = (S)-2-amino-6-oxohexanoate + L-glutamate + NADH + H(+)</text>
        <dbReference type="Rhea" id="RHEA:24520"/>
        <dbReference type="ChEBI" id="CHEBI:15377"/>
        <dbReference type="ChEBI" id="CHEBI:15378"/>
        <dbReference type="ChEBI" id="CHEBI:29985"/>
        <dbReference type="ChEBI" id="CHEBI:57540"/>
        <dbReference type="ChEBI" id="CHEBI:57945"/>
        <dbReference type="ChEBI" id="CHEBI:57951"/>
        <dbReference type="ChEBI" id="CHEBI:58321"/>
        <dbReference type="EC" id="1.5.1.9"/>
    </reaction>
</comment>
<comment type="activity regulation">
    <text evidence="4">The LKR activity is stimulated by NaCl.</text>
</comment>
<comment type="biophysicochemical properties">
    <kinetics>
        <KM evidence="2">5.18 mM for lysine (isoform Long at pH 7.5 and 30 degrees Celsius)</KM>
        <KM evidence="2">0.272 mM for alpha-ketoglutarate (isoform Long at pH 7.5 and 30 degrees Celsius)</KM>
        <KM evidence="2">0.044 mM for NADPH (isoform Long at pH 7.5 and 30 degrees Celsius)</KM>
        <KM evidence="2">0.063 mM for saccharopine (isoform Long at pH 7 and 30 degrees Celsius)</KM>
        <KM evidence="2">0.035 mM for saccharopine (isoform Long at pH 9 and 30 degrees Celsius)</KM>
        <KM evidence="2">0.13 mM for saccharopine (isoform Short at pH 7 and 30 degrees Celsius)</KM>
        <KM evidence="2">0.05 mM for saccharopine (isoform Short at pH 9 and 30 degrees Celsius)</KM>
        <KM evidence="2">0.374 mM for NAD (isoform Long at pH 7 and 30 degrees Celsius)</KM>
        <KM evidence="2">0.698 mM for NAD (isoform Long at pH 9 and 30 degrees Celsius)</KM>
        <KM evidence="2">0.333 mM for NAD (isoform Short at pH 7 and 30 degrees Celsius)</KM>
        <KM evidence="2">0.759 mM for NAD (isoform Short at pH 9 and 30 degrees Celsius)</KM>
    </kinetics>
    <phDependence>
        <text evidence="2">Optimum pH is 7.5 for LKR activity of isoform Long, and 9 for SDH activity of both isoforms Long and Short.</text>
    </phDependence>
</comment>
<comment type="pathway">
    <text>Amino-acid degradation; L-lysine degradation via saccharopine pathway; glutaryl-CoA from L-lysine: step 1/6.</text>
</comment>
<comment type="pathway">
    <text>Amino-acid degradation; L-lysine degradation via saccharopine pathway; glutaryl-CoA from L-lysine: step 2/6.</text>
</comment>
<comment type="subunit">
    <text evidence="4">Homodimer.</text>
</comment>
<comment type="subcellular location">
    <subcellularLocation>
        <location evidence="2">Cytoplasm</location>
    </subcellularLocation>
</comment>
<comment type="alternative products">
    <event type="alternative initiation"/>
    <isoform>
        <id>Q9SMZ4-1</id>
        <name>Long</name>
        <sequence type="displayed"/>
    </isoform>
    <isoform>
        <id>Q9SMZ4-2</id>
        <name>Short</name>
        <sequence type="described" ref="VSP_018641"/>
    </isoform>
</comment>
<comment type="tissue specificity">
    <text evidence="6 7">Ubiquitous, with higher levels in flowers. Isoform Long is mostly present in young leaves, cotyledons, root tips and mature root parts. Whereas isoform Short is mostly expressed in cotyledons and at low levels in all root parts.</text>
</comment>
<comment type="developmental stage">
    <text evidence="7">In flowers, confined to ovules and vascular tissue of anther filament. In developing and mature seeds, expressed in embryo and the outer layers of the endosperm.</text>
</comment>
<comment type="induction">
    <text evidence="5 6">Lysine, Sugar starvation, ABA and MeJA induce isoform Long, but not isoform Short (at protein level). Nitrogen starvation repress isoform Long, but not isoform Short (at protein level). Isoform Long and isoform Short are both slightly induced by NaCl and drought stress, but repressed by sugars.</text>
</comment>
<comment type="PTM">
    <text evidence="4">Phosphorylation of Ser-458 seems important for the LKR activity.</text>
</comment>
<comment type="miscellaneous">
    <molecule>Isoform Long</molecule>
    <text>Contains both LKR and SDH activities.</text>
</comment>
<comment type="miscellaneous">
    <molecule>Isoform Short</molecule>
    <text evidence="10">Contains only SDH activity.</text>
</comment>
<comment type="similarity">
    <text evidence="10">In the N-terminal section; belongs to the AlaDH/PNT family.</text>
</comment>
<comment type="similarity">
    <text evidence="10">In the C-terminal section; belongs to the saccharopine dehydrogenase family.</text>
</comment>
<comment type="sequence caution" evidence="10">
    <conflict type="erroneous initiation">
        <sequence resource="EMBL-CDS" id="AAK64010"/>
    </conflict>
</comment>
<comment type="sequence caution" evidence="10">
    <conflict type="miscellaneous discrepancy">
        <sequence resource="EMBL-CDS" id="AAK97099"/>
    </conflict>
    <text>Chimeric cDNA. Its C-terminal part is derived from gene At1G61240 whose function is unknown. Originally thought to be an alternative splicing form of At4g33150.</text>
</comment>
<comment type="sequence caution" evidence="10">
    <conflict type="erroneous initiation">
        <sequence resource="EMBL-CDS" id="AAM16268"/>
    </conflict>
</comment>
<protein>
    <recommendedName>
        <fullName>Alpha-aminoadipic semialdehyde synthase</fullName>
    </recommendedName>
    <alternativeName>
        <fullName>cAt-LKR/SDH</fullName>
        <shortName>LKR/SDH</shortName>
    </alternativeName>
    <domain>
        <recommendedName>
            <fullName>Lysine ketoglutarate reductase</fullName>
            <shortName>LKR</shortName>
            <ecNumber>1.5.1.8</ecNumber>
        </recommendedName>
    </domain>
    <domain>
        <recommendedName>
            <fullName>Saccharopine dehydrogenase</fullName>
            <ecNumber>1.5.1.9</ecNumber>
        </recommendedName>
        <alternativeName>
            <fullName>cAt-SDH</fullName>
            <shortName>SDH</shortName>
        </alternativeName>
    </domain>
</protein>